<comment type="function">
    <text evidence="2">May be involved in the lateral transport of nicotianamine-chelated metals in the vasculature.</text>
</comment>
<comment type="subcellular location">
    <subcellularLocation>
        <location evidence="3">Membrane</location>
        <topology evidence="3">Multi-pass membrane protein</topology>
    </subcellularLocation>
</comment>
<comment type="tissue specificity">
    <text evidence="2">Expressed in leaves, anthers and pollen grains. Restricted to the vasculature.</text>
</comment>
<comment type="developmental stage">
    <text evidence="2">Highly expressed during leaf senescence.</text>
</comment>
<comment type="induction">
    <text evidence="2">Slight induction by manganese, copper or zinc deficiency. Inhibited upon iron deficiency and induced by iron overload.</text>
</comment>
<comment type="disruption phenotype">
    <text evidence="2">No visible phenotype.</text>
</comment>
<comment type="similarity">
    <text evidence="3">Belongs to the YSL (TC 2.A.67.2) family.</text>
</comment>
<comment type="sequence caution" evidence="3">
    <conflict type="erroneous gene model prediction">
        <sequence resource="EMBL-CDS" id="BAB09731"/>
    </conflict>
</comment>
<gene>
    <name type="primary">YSL3</name>
    <name type="ordered locus">At5g53550</name>
    <name type="ORF">MNC6.9</name>
</gene>
<protein>
    <recommendedName>
        <fullName>Metal-nicotianamine transporter YSL3</fullName>
    </recommendedName>
    <alternativeName>
        <fullName>Protein YELLOW STRIPE LIKE 3</fullName>
        <shortName>AtYSL3</shortName>
    </alternativeName>
</protein>
<reference key="1">
    <citation type="journal article" date="2006" name="Plant Physiol.">
        <title>Mutations in Arabidopsis yellow stripe-like1 and yellow stripe-like3 reveal their roles in metal ion homeostasis and loading of metal ions in seeds.</title>
        <authorList>
            <person name="Waters B.M."/>
            <person name="Chu H.-H."/>
            <person name="DiDonato R.J. Jr."/>
            <person name="Roberts L.A."/>
            <person name="Eisley R.B."/>
            <person name="Lahner B."/>
            <person name="Salt D.E."/>
            <person name="Walker E.L."/>
        </authorList>
    </citation>
    <scope>NUCLEOTIDE SEQUENCE [MRNA]</scope>
    <scope>FUNCTION</scope>
    <scope>TISSUE SPECIFICITY</scope>
    <scope>DEVELOPMENTAL STAGE</scope>
    <scope>INDUCTION</scope>
    <scope>DISRUPTION PHENOTYPE</scope>
</reference>
<reference key="2">
    <citation type="journal article" date="1998" name="DNA Res.">
        <title>Structural analysis of Arabidopsis thaliana chromosome 5. VII. Sequence features of the regions of 1,013,767 bp covered by sixteen physically assigned P1 and TAC clones.</title>
        <authorList>
            <person name="Nakamura Y."/>
            <person name="Sato S."/>
            <person name="Asamizu E."/>
            <person name="Kaneko T."/>
            <person name="Kotani H."/>
            <person name="Miyajima N."/>
            <person name="Tabata S."/>
        </authorList>
    </citation>
    <scope>NUCLEOTIDE SEQUENCE [LARGE SCALE GENOMIC DNA]</scope>
    <source>
        <strain>cv. Columbia</strain>
    </source>
</reference>
<reference key="3">
    <citation type="journal article" date="2017" name="Plant J.">
        <title>Araport11: a complete reannotation of the Arabidopsis thaliana reference genome.</title>
        <authorList>
            <person name="Cheng C.Y."/>
            <person name="Krishnakumar V."/>
            <person name="Chan A.P."/>
            <person name="Thibaud-Nissen F."/>
            <person name="Schobel S."/>
            <person name="Town C.D."/>
        </authorList>
    </citation>
    <scope>GENOME REANNOTATION</scope>
    <source>
        <strain>cv. Columbia</strain>
    </source>
</reference>
<reference key="4">
    <citation type="submission" date="2006-07" db="EMBL/GenBank/DDBJ databases">
        <title>Large-scale analysis of RIKEN Arabidopsis full-length (RAFL) cDNAs.</title>
        <authorList>
            <person name="Totoki Y."/>
            <person name="Seki M."/>
            <person name="Ishida J."/>
            <person name="Nakajima M."/>
            <person name="Enju A."/>
            <person name="Kamiya A."/>
            <person name="Narusaka M."/>
            <person name="Shin-i T."/>
            <person name="Nakagawa M."/>
            <person name="Sakamoto N."/>
            <person name="Oishi K."/>
            <person name="Kohara Y."/>
            <person name="Kobayashi M."/>
            <person name="Toyoda A."/>
            <person name="Sakaki Y."/>
            <person name="Sakurai T."/>
            <person name="Iida K."/>
            <person name="Akiyama K."/>
            <person name="Satou M."/>
            <person name="Toyoda T."/>
            <person name="Konagaya A."/>
            <person name="Carninci P."/>
            <person name="Kawai J."/>
            <person name="Hayashizaki Y."/>
            <person name="Shinozaki K."/>
        </authorList>
    </citation>
    <scope>NUCLEOTIDE SEQUENCE [LARGE SCALE MRNA] OF 185-675</scope>
    <source>
        <strain>cv. Columbia</strain>
    </source>
</reference>
<feature type="chain" id="PRO_0000311414" description="Metal-nicotianamine transporter YSL3">
    <location>
        <begin position="1"/>
        <end position="675"/>
    </location>
</feature>
<feature type="transmembrane region" description="Helical" evidence="1">
    <location>
        <begin position="42"/>
        <end position="62"/>
    </location>
</feature>
<feature type="transmembrane region" description="Helical" evidence="1">
    <location>
        <begin position="66"/>
        <end position="86"/>
    </location>
</feature>
<feature type="transmembrane region" description="Helical" evidence="1">
    <location>
        <begin position="114"/>
        <end position="134"/>
    </location>
</feature>
<feature type="transmembrane region" description="Helical" evidence="1">
    <location>
        <begin position="159"/>
        <end position="179"/>
    </location>
</feature>
<feature type="transmembrane region" description="Helical" evidence="1">
    <location>
        <begin position="219"/>
        <end position="239"/>
    </location>
</feature>
<feature type="transmembrane region" description="Helical" evidence="1">
    <location>
        <begin position="280"/>
        <end position="300"/>
    </location>
</feature>
<feature type="transmembrane region" description="Helical" evidence="1">
    <location>
        <begin position="325"/>
        <end position="345"/>
    </location>
</feature>
<feature type="transmembrane region" description="Helical" evidence="1">
    <location>
        <begin position="386"/>
        <end position="406"/>
    </location>
</feature>
<feature type="transmembrane region" description="Helical" evidence="1">
    <location>
        <begin position="408"/>
        <end position="428"/>
    </location>
</feature>
<feature type="transmembrane region" description="Helical" evidence="1">
    <location>
        <begin position="450"/>
        <end position="470"/>
    </location>
</feature>
<feature type="transmembrane region" description="Helical" evidence="1">
    <location>
        <begin position="504"/>
        <end position="524"/>
    </location>
</feature>
<feature type="transmembrane region" description="Helical" evidence="1">
    <location>
        <begin position="556"/>
        <end position="576"/>
    </location>
</feature>
<feature type="transmembrane region" description="Helical" evidence="1">
    <location>
        <begin position="602"/>
        <end position="622"/>
    </location>
</feature>
<feature type="transmembrane region" description="Helical" evidence="1">
    <location>
        <begin position="630"/>
        <end position="650"/>
    </location>
</feature>
<evidence type="ECO:0000255" key="1"/>
<evidence type="ECO:0000269" key="2">
    <source>
    </source>
</evidence>
<evidence type="ECO:0000305" key="3"/>
<dbReference type="EMBL" id="DQ385057">
    <property type="protein sequence ID" value="ABD38920.1"/>
    <property type="molecule type" value="mRNA"/>
</dbReference>
<dbReference type="EMBL" id="AB015476">
    <property type="protein sequence ID" value="BAB09731.1"/>
    <property type="status" value="ALT_SEQ"/>
    <property type="molecule type" value="Genomic_DNA"/>
</dbReference>
<dbReference type="EMBL" id="CP002688">
    <property type="protein sequence ID" value="AED96375.1"/>
    <property type="molecule type" value="Genomic_DNA"/>
</dbReference>
<dbReference type="EMBL" id="CP002688">
    <property type="protein sequence ID" value="AED96376.1"/>
    <property type="molecule type" value="Genomic_DNA"/>
</dbReference>
<dbReference type="EMBL" id="CP002688">
    <property type="protein sequence ID" value="ANM70470.1"/>
    <property type="molecule type" value="Genomic_DNA"/>
</dbReference>
<dbReference type="EMBL" id="CP002688">
    <property type="protein sequence ID" value="ANM70472.1"/>
    <property type="molecule type" value="Genomic_DNA"/>
</dbReference>
<dbReference type="EMBL" id="CP002688">
    <property type="protein sequence ID" value="ANM70473.1"/>
    <property type="molecule type" value="Genomic_DNA"/>
</dbReference>
<dbReference type="EMBL" id="AK226687">
    <property type="protein sequence ID" value="BAE98794.1"/>
    <property type="molecule type" value="mRNA"/>
</dbReference>
<dbReference type="RefSeq" id="NP_001190532.1">
    <property type="nucleotide sequence ID" value="NM_001203603.2"/>
</dbReference>
<dbReference type="RefSeq" id="NP_001332078.1">
    <property type="nucleotide sequence ID" value="NM_001345064.1"/>
</dbReference>
<dbReference type="RefSeq" id="NP_001332080.1">
    <property type="nucleotide sequence ID" value="NM_001345063.1"/>
</dbReference>
<dbReference type="RefSeq" id="NP_001332081.1">
    <property type="nucleotide sequence ID" value="NM_001345061.1"/>
</dbReference>
<dbReference type="RefSeq" id="NP_200167.2">
    <property type="nucleotide sequence ID" value="NM_124735.4"/>
</dbReference>
<dbReference type="SMR" id="Q2EF88"/>
<dbReference type="BioGRID" id="20681">
    <property type="interactions" value="9"/>
</dbReference>
<dbReference type="FunCoup" id="Q2EF88">
    <property type="interactions" value="217"/>
</dbReference>
<dbReference type="IntAct" id="Q2EF88">
    <property type="interactions" value="9"/>
</dbReference>
<dbReference type="STRING" id="3702.Q2EF88"/>
<dbReference type="TCDB" id="2.A.67.2.4">
    <property type="family name" value="the oligopeptide transporter (opt) family"/>
</dbReference>
<dbReference type="PaxDb" id="3702-AT5G53550.2"/>
<dbReference type="ProteomicsDB" id="242353"/>
<dbReference type="EnsemblPlants" id="AT5G53550.1">
    <property type="protein sequence ID" value="AT5G53550.1"/>
    <property type="gene ID" value="AT5G53550"/>
</dbReference>
<dbReference type="EnsemblPlants" id="AT5G53550.2">
    <property type="protein sequence ID" value="AT5G53550.2"/>
    <property type="gene ID" value="AT5G53550"/>
</dbReference>
<dbReference type="EnsemblPlants" id="AT5G53550.3">
    <property type="protein sequence ID" value="AT5G53550.3"/>
    <property type="gene ID" value="AT5G53550"/>
</dbReference>
<dbReference type="EnsemblPlants" id="AT5G53550.5">
    <property type="protein sequence ID" value="AT5G53550.5"/>
    <property type="gene ID" value="AT5G53550"/>
</dbReference>
<dbReference type="EnsemblPlants" id="AT5G53550.6">
    <property type="protein sequence ID" value="AT5G53550.6"/>
    <property type="gene ID" value="AT5G53550"/>
</dbReference>
<dbReference type="GeneID" id="835437"/>
<dbReference type="Gramene" id="AT5G53550.1">
    <property type="protein sequence ID" value="AT5G53550.1"/>
    <property type="gene ID" value="AT5G53550"/>
</dbReference>
<dbReference type="Gramene" id="AT5G53550.2">
    <property type="protein sequence ID" value="AT5G53550.2"/>
    <property type="gene ID" value="AT5G53550"/>
</dbReference>
<dbReference type="Gramene" id="AT5G53550.3">
    <property type="protein sequence ID" value="AT5G53550.3"/>
    <property type="gene ID" value="AT5G53550"/>
</dbReference>
<dbReference type="Gramene" id="AT5G53550.5">
    <property type="protein sequence ID" value="AT5G53550.5"/>
    <property type="gene ID" value="AT5G53550"/>
</dbReference>
<dbReference type="Gramene" id="AT5G53550.6">
    <property type="protein sequence ID" value="AT5G53550.6"/>
    <property type="gene ID" value="AT5G53550"/>
</dbReference>
<dbReference type="KEGG" id="ath:AT5G53550"/>
<dbReference type="Araport" id="AT5G53550"/>
<dbReference type="TAIR" id="AT5G53550">
    <property type="gene designation" value="YSL3"/>
</dbReference>
<dbReference type="eggNOG" id="ENOG502QQ2H">
    <property type="taxonomic scope" value="Eukaryota"/>
</dbReference>
<dbReference type="HOGENOM" id="CLU_015477_2_0_1"/>
<dbReference type="InParanoid" id="Q2EF88"/>
<dbReference type="OMA" id="KSICARM"/>
<dbReference type="PhylomeDB" id="Q2EF88"/>
<dbReference type="PRO" id="PR:Q2EF88"/>
<dbReference type="Proteomes" id="UP000006548">
    <property type="component" value="Chromosome 5"/>
</dbReference>
<dbReference type="ExpressionAtlas" id="Q2EF88">
    <property type="expression patterns" value="baseline and differential"/>
</dbReference>
<dbReference type="GO" id="GO:0005886">
    <property type="term" value="C:plasma membrane"/>
    <property type="evidence" value="ECO:0000314"/>
    <property type="project" value="TAIR"/>
</dbReference>
<dbReference type="GO" id="GO:0035673">
    <property type="term" value="F:oligopeptide transmembrane transporter activity"/>
    <property type="evidence" value="ECO:0007669"/>
    <property type="project" value="InterPro"/>
</dbReference>
<dbReference type="GO" id="GO:0003006">
    <property type="term" value="P:developmental process involved in reproduction"/>
    <property type="evidence" value="ECO:0000316"/>
    <property type="project" value="TAIR"/>
</dbReference>
<dbReference type="GO" id="GO:0006826">
    <property type="term" value="P:iron ion transport"/>
    <property type="evidence" value="ECO:0007669"/>
    <property type="project" value="UniProtKB-KW"/>
</dbReference>
<dbReference type="GO" id="GO:0009624">
    <property type="term" value="P:response to nematode"/>
    <property type="evidence" value="ECO:0007007"/>
    <property type="project" value="TAIR"/>
</dbReference>
<dbReference type="GO" id="GO:0048316">
    <property type="term" value="P:seed development"/>
    <property type="evidence" value="ECO:0000316"/>
    <property type="project" value="TAIR"/>
</dbReference>
<dbReference type="InterPro" id="IPR004813">
    <property type="entry name" value="OPT"/>
</dbReference>
<dbReference type="InterPro" id="IPR045035">
    <property type="entry name" value="YSL-like"/>
</dbReference>
<dbReference type="NCBIfam" id="TIGR00728">
    <property type="entry name" value="OPT_sfam"/>
    <property type="match status" value="1"/>
</dbReference>
<dbReference type="PANTHER" id="PTHR31645:SF4">
    <property type="entry name" value="METAL-NICOTIANAMINE TRANSPORTER YSL3"/>
    <property type="match status" value="1"/>
</dbReference>
<dbReference type="PANTHER" id="PTHR31645">
    <property type="entry name" value="OLIGOPEPTIDE TRANSPORTER YGL114W-RELATED"/>
    <property type="match status" value="1"/>
</dbReference>
<dbReference type="Pfam" id="PF03169">
    <property type="entry name" value="OPT"/>
    <property type="match status" value="1"/>
</dbReference>
<sequence>MRSMMMEREGRNEIEREVIDDLEETQNEGDDFKSIPPWKEQITFRGIVASLIIGIIYSVIVMKLNLTTGLVPNLNVSAALLAFVFLRSWTKLLTKAGIVTKPFTKQENTVVQTCAVACYSIAVGGGFGSYLLGLNRITYEQSGGTHTDGNYPEGTKEPGIGWMTAFLFFTCFVGLLALVPLRKIMIIDYKLTYPSGTATAVLINGFHTPKGNKMAKKQVFGFVKYFSFSFIWAFFQWFFSGGTECGFIQFPTFGLEALKNTFYFDFSMTYVGAGMICPHIVNISLLFGAVLSWGIMWPLIKGLKGDWFPSTLPENSMKSLNGYKVFISISLILGDGLYQFIKILFKTGINMYVKLNNRNSGKSNSEKDKQSIADLKRDEIFVRDSIPLWVAAVGYAAFSVVSIIAIPIMFPELKWYFIVVAYMLAPSLGFSNAYGAGLTDMNMAYNYGKVALFILAAMAGKQNGVVAGLVGCGLIKSIVSISSDLMHDFKTGHLTLTSPRSMLVSQAIGTAIGCVVAPLTFFLFYKAFDVGNQEGEYKAPYALVYRNMAILGVEGFSALPQHCLQLCYGFFAFAVAANLVRDRLPDKIGNWVPLPMAMAVPFLVGGYFAIDMCVGSLIVFAWNMRDRVKAGLMVPAVASGLICGDGLWILPSSVLALAGVRPPICMGFMPSKYSS</sequence>
<organism>
    <name type="scientific">Arabidopsis thaliana</name>
    <name type="common">Mouse-ear cress</name>
    <dbReference type="NCBI Taxonomy" id="3702"/>
    <lineage>
        <taxon>Eukaryota</taxon>
        <taxon>Viridiplantae</taxon>
        <taxon>Streptophyta</taxon>
        <taxon>Embryophyta</taxon>
        <taxon>Tracheophyta</taxon>
        <taxon>Spermatophyta</taxon>
        <taxon>Magnoliopsida</taxon>
        <taxon>eudicotyledons</taxon>
        <taxon>Gunneridae</taxon>
        <taxon>Pentapetalae</taxon>
        <taxon>rosids</taxon>
        <taxon>malvids</taxon>
        <taxon>Brassicales</taxon>
        <taxon>Brassicaceae</taxon>
        <taxon>Camelineae</taxon>
        <taxon>Arabidopsis</taxon>
    </lineage>
</organism>
<accession>Q2EF88</accession>
<accession>Q0WVQ4</accession>
<accession>Q9FJC8</accession>
<proteinExistence type="evidence at transcript level"/>
<name>YSL3_ARATH</name>
<keyword id="KW-0406">Ion transport</keyword>
<keyword id="KW-0408">Iron</keyword>
<keyword id="KW-0410">Iron transport</keyword>
<keyword id="KW-0472">Membrane</keyword>
<keyword id="KW-1185">Reference proteome</keyword>
<keyword id="KW-0812">Transmembrane</keyword>
<keyword id="KW-1133">Transmembrane helix</keyword>
<keyword id="KW-0813">Transport</keyword>